<organism>
    <name type="scientific">Escherichia coli (strain UTI89 / UPEC)</name>
    <dbReference type="NCBI Taxonomy" id="364106"/>
    <lineage>
        <taxon>Bacteria</taxon>
        <taxon>Pseudomonadati</taxon>
        <taxon>Pseudomonadota</taxon>
        <taxon>Gammaproteobacteria</taxon>
        <taxon>Enterobacterales</taxon>
        <taxon>Enterobacteriaceae</taxon>
        <taxon>Escherichia</taxon>
    </lineage>
</organism>
<dbReference type="EC" id="6.3.1.21" evidence="1"/>
<dbReference type="EMBL" id="CP000243">
    <property type="protein sequence ID" value="ABE07528.1"/>
    <property type="molecule type" value="Genomic_DNA"/>
</dbReference>
<dbReference type="RefSeq" id="WP_000173466.1">
    <property type="nucleotide sequence ID" value="NZ_CP064825.1"/>
</dbReference>
<dbReference type="SMR" id="Q1RAT6"/>
<dbReference type="KEGG" id="eci:UTI89_C2052"/>
<dbReference type="HOGENOM" id="CLU_011534_1_3_6"/>
<dbReference type="UniPathway" id="UPA00074">
    <property type="reaction ID" value="UER00127"/>
</dbReference>
<dbReference type="Proteomes" id="UP000001952">
    <property type="component" value="Chromosome"/>
</dbReference>
<dbReference type="GO" id="GO:0005829">
    <property type="term" value="C:cytosol"/>
    <property type="evidence" value="ECO:0007669"/>
    <property type="project" value="TreeGrafter"/>
</dbReference>
<dbReference type="GO" id="GO:0005524">
    <property type="term" value="F:ATP binding"/>
    <property type="evidence" value="ECO:0007669"/>
    <property type="project" value="UniProtKB-UniRule"/>
</dbReference>
<dbReference type="GO" id="GO:0000287">
    <property type="term" value="F:magnesium ion binding"/>
    <property type="evidence" value="ECO:0007669"/>
    <property type="project" value="InterPro"/>
</dbReference>
<dbReference type="GO" id="GO:0043815">
    <property type="term" value="F:phosphoribosylglycinamide formyltransferase 2 activity"/>
    <property type="evidence" value="ECO:0007669"/>
    <property type="project" value="UniProtKB-UniRule"/>
</dbReference>
<dbReference type="GO" id="GO:0004644">
    <property type="term" value="F:phosphoribosylglycinamide formyltransferase activity"/>
    <property type="evidence" value="ECO:0007669"/>
    <property type="project" value="InterPro"/>
</dbReference>
<dbReference type="GO" id="GO:0006189">
    <property type="term" value="P:'de novo' IMP biosynthetic process"/>
    <property type="evidence" value="ECO:0007669"/>
    <property type="project" value="UniProtKB-UniRule"/>
</dbReference>
<dbReference type="FunFam" id="3.30.1490.20:FF:000013">
    <property type="entry name" value="Formate-dependent phosphoribosylglycinamide formyltransferase"/>
    <property type="match status" value="1"/>
</dbReference>
<dbReference type="FunFam" id="3.30.470.20:FF:000027">
    <property type="entry name" value="Formate-dependent phosphoribosylglycinamide formyltransferase"/>
    <property type="match status" value="1"/>
</dbReference>
<dbReference type="FunFam" id="3.40.50.20:FF:000007">
    <property type="entry name" value="Formate-dependent phosphoribosylglycinamide formyltransferase"/>
    <property type="match status" value="1"/>
</dbReference>
<dbReference type="Gene3D" id="3.40.50.20">
    <property type="match status" value="1"/>
</dbReference>
<dbReference type="Gene3D" id="3.30.1490.20">
    <property type="entry name" value="ATP-grasp fold, A domain"/>
    <property type="match status" value="1"/>
</dbReference>
<dbReference type="Gene3D" id="3.30.470.20">
    <property type="entry name" value="ATP-grasp fold, B domain"/>
    <property type="match status" value="1"/>
</dbReference>
<dbReference type="HAMAP" id="MF_01643">
    <property type="entry name" value="PurT"/>
    <property type="match status" value="1"/>
</dbReference>
<dbReference type="InterPro" id="IPR011761">
    <property type="entry name" value="ATP-grasp"/>
</dbReference>
<dbReference type="InterPro" id="IPR003135">
    <property type="entry name" value="ATP-grasp_carboxylate-amine"/>
</dbReference>
<dbReference type="InterPro" id="IPR013815">
    <property type="entry name" value="ATP_grasp_subdomain_1"/>
</dbReference>
<dbReference type="InterPro" id="IPR016185">
    <property type="entry name" value="PreATP-grasp_dom_sf"/>
</dbReference>
<dbReference type="InterPro" id="IPR005862">
    <property type="entry name" value="PurT"/>
</dbReference>
<dbReference type="InterPro" id="IPR054350">
    <property type="entry name" value="PurT/PurK_preATP-grasp"/>
</dbReference>
<dbReference type="InterPro" id="IPR048740">
    <property type="entry name" value="PurT_C"/>
</dbReference>
<dbReference type="InterPro" id="IPR011054">
    <property type="entry name" value="Rudment_hybrid_motif"/>
</dbReference>
<dbReference type="NCBIfam" id="NF006766">
    <property type="entry name" value="PRK09288.1"/>
    <property type="match status" value="1"/>
</dbReference>
<dbReference type="NCBIfam" id="TIGR01142">
    <property type="entry name" value="purT"/>
    <property type="match status" value="1"/>
</dbReference>
<dbReference type="PANTHER" id="PTHR43055">
    <property type="entry name" value="FORMATE-DEPENDENT PHOSPHORIBOSYLGLYCINAMIDE FORMYLTRANSFERASE"/>
    <property type="match status" value="1"/>
</dbReference>
<dbReference type="PANTHER" id="PTHR43055:SF1">
    <property type="entry name" value="FORMATE-DEPENDENT PHOSPHORIBOSYLGLYCINAMIDE FORMYLTRANSFERASE"/>
    <property type="match status" value="1"/>
</dbReference>
<dbReference type="Pfam" id="PF02222">
    <property type="entry name" value="ATP-grasp"/>
    <property type="match status" value="1"/>
</dbReference>
<dbReference type="Pfam" id="PF21244">
    <property type="entry name" value="PurT_C"/>
    <property type="match status" value="1"/>
</dbReference>
<dbReference type="Pfam" id="PF22660">
    <property type="entry name" value="RS_preATP-grasp-like"/>
    <property type="match status" value="1"/>
</dbReference>
<dbReference type="SUPFAM" id="SSF56059">
    <property type="entry name" value="Glutathione synthetase ATP-binding domain-like"/>
    <property type="match status" value="1"/>
</dbReference>
<dbReference type="SUPFAM" id="SSF52440">
    <property type="entry name" value="PreATP-grasp domain"/>
    <property type="match status" value="1"/>
</dbReference>
<dbReference type="SUPFAM" id="SSF51246">
    <property type="entry name" value="Rudiment single hybrid motif"/>
    <property type="match status" value="1"/>
</dbReference>
<dbReference type="PROSITE" id="PS50975">
    <property type="entry name" value="ATP_GRASP"/>
    <property type="match status" value="1"/>
</dbReference>
<protein>
    <recommendedName>
        <fullName evidence="1">Formate-dependent phosphoribosylglycinamide formyltransferase</fullName>
        <ecNumber evidence="1">6.3.1.21</ecNumber>
    </recommendedName>
    <alternativeName>
        <fullName evidence="1">5'-phosphoribosylglycinamide transformylase 2</fullName>
    </alternativeName>
    <alternativeName>
        <fullName evidence="1">Formate-dependent GAR transformylase</fullName>
    </alternativeName>
    <alternativeName>
        <fullName evidence="1">GAR transformylase 2</fullName>
        <shortName evidence="1">GART 2</shortName>
    </alternativeName>
    <alternativeName>
        <fullName evidence="1">Non-folate glycinamide ribonucleotide transformylase</fullName>
    </alternativeName>
    <alternativeName>
        <fullName evidence="1">Phosphoribosylglycinamide formyltransferase 2</fullName>
    </alternativeName>
</protein>
<comment type="function">
    <text evidence="1">Involved in the de novo purine biosynthesis. Catalyzes the transfer of formate to 5-phospho-ribosyl-glycinamide (GAR), producing 5-phospho-ribosyl-N-formylglycinamide (FGAR). Formate is provided by PurU via hydrolysis of 10-formyl-tetrahydrofolate.</text>
</comment>
<comment type="catalytic activity">
    <reaction evidence="1">
        <text>N(1)-(5-phospho-beta-D-ribosyl)glycinamide + formate + ATP = N(2)-formyl-N(1)-(5-phospho-beta-D-ribosyl)glycinamide + ADP + phosphate + H(+)</text>
        <dbReference type="Rhea" id="RHEA:24829"/>
        <dbReference type="ChEBI" id="CHEBI:15378"/>
        <dbReference type="ChEBI" id="CHEBI:15740"/>
        <dbReference type="ChEBI" id="CHEBI:30616"/>
        <dbReference type="ChEBI" id="CHEBI:43474"/>
        <dbReference type="ChEBI" id="CHEBI:143788"/>
        <dbReference type="ChEBI" id="CHEBI:147286"/>
        <dbReference type="ChEBI" id="CHEBI:456216"/>
        <dbReference type="EC" id="6.3.1.21"/>
    </reaction>
    <physiologicalReaction direction="left-to-right" evidence="1">
        <dbReference type="Rhea" id="RHEA:24830"/>
    </physiologicalReaction>
</comment>
<comment type="pathway">
    <text evidence="1">Purine metabolism; IMP biosynthesis via de novo pathway; N(2)-formyl-N(1)-(5-phospho-D-ribosyl)glycinamide from N(1)-(5-phospho-D-ribosyl)glycinamide (formate route): step 1/1.</text>
</comment>
<comment type="subunit">
    <text evidence="1">Homodimer.</text>
</comment>
<comment type="similarity">
    <text evidence="1">Belongs to the PurK/PurT family.</text>
</comment>
<accession>Q1RAT6</accession>
<proteinExistence type="inferred from homology"/>
<feature type="chain" id="PRO_0000319162" description="Formate-dependent phosphoribosylglycinamide formyltransferase">
    <location>
        <begin position="1"/>
        <end position="392"/>
    </location>
</feature>
<feature type="domain" description="ATP-grasp" evidence="1">
    <location>
        <begin position="119"/>
        <end position="308"/>
    </location>
</feature>
<feature type="binding site" evidence="1">
    <location>
        <begin position="22"/>
        <end position="23"/>
    </location>
    <ligand>
        <name>N(1)-(5-phospho-beta-D-ribosyl)glycinamide</name>
        <dbReference type="ChEBI" id="CHEBI:143788"/>
    </ligand>
</feature>
<feature type="binding site" evidence="1">
    <location>
        <position position="82"/>
    </location>
    <ligand>
        <name>N(1)-(5-phospho-beta-D-ribosyl)glycinamide</name>
        <dbReference type="ChEBI" id="CHEBI:143788"/>
    </ligand>
</feature>
<feature type="binding site" evidence="1">
    <location>
        <position position="114"/>
    </location>
    <ligand>
        <name>ATP</name>
        <dbReference type="ChEBI" id="CHEBI:30616"/>
    </ligand>
</feature>
<feature type="binding site" evidence="1">
    <location>
        <position position="155"/>
    </location>
    <ligand>
        <name>ATP</name>
        <dbReference type="ChEBI" id="CHEBI:30616"/>
    </ligand>
</feature>
<feature type="binding site" evidence="1">
    <location>
        <begin position="160"/>
        <end position="165"/>
    </location>
    <ligand>
        <name>ATP</name>
        <dbReference type="ChEBI" id="CHEBI:30616"/>
    </ligand>
</feature>
<feature type="binding site" evidence="1">
    <location>
        <begin position="195"/>
        <end position="198"/>
    </location>
    <ligand>
        <name>ATP</name>
        <dbReference type="ChEBI" id="CHEBI:30616"/>
    </ligand>
</feature>
<feature type="binding site" evidence="1">
    <location>
        <position position="203"/>
    </location>
    <ligand>
        <name>ATP</name>
        <dbReference type="ChEBI" id="CHEBI:30616"/>
    </ligand>
</feature>
<feature type="binding site" evidence="1">
    <location>
        <position position="267"/>
    </location>
    <ligand>
        <name>Mg(2+)</name>
        <dbReference type="ChEBI" id="CHEBI:18420"/>
    </ligand>
</feature>
<feature type="binding site" evidence="1">
    <location>
        <position position="279"/>
    </location>
    <ligand>
        <name>Mg(2+)</name>
        <dbReference type="ChEBI" id="CHEBI:18420"/>
    </ligand>
</feature>
<feature type="binding site" evidence="1">
    <location>
        <position position="286"/>
    </location>
    <ligand>
        <name>N(1)-(5-phospho-beta-D-ribosyl)glycinamide</name>
        <dbReference type="ChEBI" id="CHEBI:143788"/>
    </ligand>
</feature>
<feature type="binding site" evidence="1">
    <location>
        <position position="355"/>
    </location>
    <ligand>
        <name>N(1)-(5-phospho-beta-D-ribosyl)glycinamide</name>
        <dbReference type="ChEBI" id="CHEBI:143788"/>
    </ligand>
</feature>
<feature type="binding site" evidence="1">
    <location>
        <begin position="362"/>
        <end position="363"/>
    </location>
    <ligand>
        <name>N(1)-(5-phospho-beta-D-ribosyl)glycinamide</name>
        <dbReference type="ChEBI" id="CHEBI:143788"/>
    </ligand>
</feature>
<sequence length="392" mass="42427">MTLLGTALRPAATRVMLLGSGELGKEVAIECQRLGVEVIAVDRYADAPAMHVAHRSHVINMLDGDALRRVVELEKPHYIVPEIEAIATDMLIQLEEEGLNVVPCARATKLTMNREGIRRLAAEELQLPTSTYRFADSENLFREAVAAIGYPCIVKPVMSSSGKGQTFIRSAEQLAHAWEYAQQGGRAGAGRVIVEGVVKFDFEITLLTVSAVDGVHFCAPVGHRQEDGDYRESWQPQQMSPLALERAQEIARKVVLALGGYGLFGVELFVCGDEVIFSEVSPRPHDTGMVTLISQDLSEFALHVRAFLGLPVGGIRQYGPAASAVILPQLTSQNVTFDNVQNAVGADLQIRLFGKPEIDGSRRLGVALATAESVVDAIERAKHAAGQVKVQG</sequence>
<reference key="1">
    <citation type="journal article" date="2006" name="Proc. Natl. Acad. Sci. U.S.A.">
        <title>Identification of genes subject to positive selection in uropathogenic strains of Escherichia coli: a comparative genomics approach.</title>
        <authorList>
            <person name="Chen S.L."/>
            <person name="Hung C.-S."/>
            <person name="Xu J."/>
            <person name="Reigstad C.S."/>
            <person name="Magrini V."/>
            <person name="Sabo A."/>
            <person name="Blasiar D."/>
            <person name="Bieri T."/>
            <person name="Meyer R.R."/>
            <person name="Ozersky P."/>
            <person name="Armstrong J.R."/>
            <person name="Fulton R.S."/>
            <person name="Latreille J.P."/>
            <person name="Spieth J."/>
            <person name="Hooton T.M."/>
            <person name="Mardis E.R."/>
            <person name="Hultgren S.J."/>
            <person name="Gordon J.I."/>
        </authorList>
    </citation>
    <scope>NUCLEOTIDE SEQUENCE [LARGE SCALE GENOMIC DNA]</scope>
    <source>
        <strain>UTI89 / UPEC</strain>
    </source>
</reference>
<keyword id="KW-0067">ATP-binding</keyword>
<keyword id="KW-0436">Ligase</keyword>
<keyword id="KW-0460">Magnesium</keyword>
<keyword id="KW-0479">Metal-binding</keyword>
<keyword id="KW-0547">Nucleotide-binding</keyword>
<keyword id="KW-0658">Purine biosynthesis</keyword>
<gene>
    <name evidence="1" type="primary">purT</name>
    <name type="ordered locus">UTI89_C2052</name>
</gene>
<evidence type="ECO:0000255" key="1">
    <source>
        <dbReference type="HAMAP-Rule" id="MF_01643"/>
    </source>
</evidence>
<name>PURT_ECOUT</name>